<organism>
    <name type="scientific">Notechis scutatus scutatus</name>
    <name type="common">Mainland tiger snake</name>
    <name type="synonym">Common tiger snake</name>
    <dbReference type="NCBI Taxonomy" id="70142"/>
    <lineage>
        <taxon>Eukaryota</taxon>
        <taxon>Metazoa</taxon>
        <taxon>Chordata</taxon>
        <taxon>Craniata</taxon>
        <taxon>Vertebrata</taxon>
        <taxon>Euteleostomi</taxon>
        <taxon>Lepidosauria</taxon>
        <taxon>Squamata</taxon>
        <taxon>Bifurcata</taxon>
        <taxon>Unidentata</taxon>
        <taxon>Episquamata</taxon>
        <taxon>Toxicofera</taxon>
        <taxon>Serpentes</taxon>
        <taxon>Colubroidea</taxon>
        <taxon>Elapidae</taxon>
        <taxon>Hydrophiinae</taxon>
        <taxon>Notechis</taxon>
    </lineage>
</organism>
<keyword id="KW-1015">Disulfide bond</keyword>
<keyword id="KW-0382">Hypotensive agent</keyword>
<keyword id="KW-0964">Secreted</keyword>
<keyword id="KW-0800">Toxin</keyword>
<keyword id="KW-0838">Vasoactive</keyword>
<keyword id="KW-0840">Vasodilator</keyword>
<comment type="function">
    <text evidence="1 2">Snake venom natriuretic peptide that targets both NPR1 and NPR2 (By similarity). Exhibits hypotensive and vasodepressor activities (By similarity).</text>
</comment>
<comment type="subcellular location">
    <subcellularLocation>
        <location evidence="6">Secreted</location>
    </subcellularLocation>
</comment>
<comment type="tissue specificity">
    <text evidence="6">Expressed by the venom gland.</text>
</comment>
<comment type="similarity">
    <text evidence="5">Belongs to the natriuretic peptide family.</text>
</comment>
<evidence type="ECO:0000250" key="1">
    <source>
        <dbReference type="UniProtKB" id="C6EVG7"/>
    </source>
</evidence>
<evidence type="ECO:0000250" key="2">
    <source>
        <dbReference type="UniProtKB" id="Q3SAE9"/>
    </source>
</evidence>
<evidence type="ECO:0000256" key="3">
    <source>
        <dbReference type="SAM" id="MobiDB-lite"/>
    </source>
</evidence>
<evidence type="ECO:0000303" key="4">
    <source>
    </source>
</evidence>
<evidence type="ECO:0000305" key="5"/>
<evidence type="ECO:0000305" key="6">
    <source>
    </source>
</evidence>
<proteinExistence type="evidence at transcript level"/>
<sequence length="39" mass="3681">SGSKTAKIGDGCFGLPLDRIGSTSGMGCGSVPKPTPGGS</sequence>
<protein>
    <recommendedName>
        <fullName evidence="4">Natriuretic peptide NsNP-b</fullName>
    </recommendedName>
</protein>
<accession>Q3SAE7</accession>
<dbReference type="EMBL" id="DQ116733">
    <property type="protein sequence ID" value="AAZ82828.1"/>
    <property type="molecule type" value="mRNA"/>
</dbReference>
<dbReference type="GO" id="GO:0005576">
    <property type="term" value="C:extracellular region"/>
    <property type="evidence" value="ECO:0007669"/>
    <property type="project" value="UniProtKB-SubCell"/>
</dbReference>
<dbReference type="GO" id="GO:0005179">
    <property type="term" value="F:hormone activity"/>
    <property type="evidence" value="ECO:0007669"/>
    <property type="project" value="InterPro"/>
</dbReference>
<dbReference type="GO" id="GO:0090729">
    <property type="term" value="F:toxin activity"/>
    <property type="evidence" value="ECO:0007669"/>
    <property type="project" value="UniProtKB-KW"/>
</dbReference>
<dbReference type="GO" id="GO:0008217">
    <property type="term" value="P:regulation of blood pressure"/>
    <property type="evidence" value="ECO:0007669"/>
    <property type="project" value="UniProtKB-KW"/>
</dbReference>
<dbReference type="GO" id="GO:0042311">
    <property type="term" value="P:vasodilation"/>
    <property type="evidence" value="ECO:0007669"/>
    <property type="project" value="UniProtKB-KW"/>
</dbReference>
<dbReference type="InterPro" id="IPR000663">
    <property type="entry name" value="Natr_peptide"/>
</dbReference>
<dbReference type="InterPro" id="IPR030480">
    <property type="entry name" value="Natr_peptide_CS"/>
</dbReference>
<dbReference type="Pfam" id="PF00212">
    <property type="entry name" value="ANP"/>
    <property type="match status" value="1"/>
</dbReference>
<dbReference type="SMART" id="SM00183">
    <property type="entry name" value="NAT_PEP"/>
    <property type="match status" value="1"/>
</dbReference>
<dbReference type="PROSITE" id="PS00263">
    <property type="entry name" value="NATRIURETIC_PEPTIDE"/>
    <property type="match status" value="1"/>
</dbReference>
<feature type="propeptide" id="PRO_0000459636" evidence="5">
    <location>
        <begin position="1" status="less than"/>
        <end position="8"/>
    </location>
</feature>
<feature type="peptide" id="PRO_5000140411" description="Natriuretic peptide NsNP-b" evidence="2">
    <location>
        <begin position="9"/>
        <end position="39"/>
    </location>
</feature>
<feature type="region of interest" description="Disordered" evidence="3">
    <location>
        <begin position="19"/>
        <end position="39"/>
    </location>
</feature>
<feature type="disulfide bond" evidence="2">
    <location>
        <begin position="12"/>
        <end position="28"/>
    </location>
</feature>
<feature type="non-terminal residue">
    <location>
        <position position="1"/>
    </location>
</feature>
<reference key="1">
    <citation type="journal article" date="2006" name="Biochimie">
        <title>Cloning and characterisation of natriuretic peptides from the venom glands of Australian elapids.</title>
        <authorList>
            <person name="St Pierre L."/>
            <person name="Flight S."/>
            <person name="Masci P.P."/>
            <person name="Hanchard K.J."/>
            <person name="Lewis R.J."/>
            <person name="Alewood P.F."/>
            <person name="de Jersey J."/>
            <person name="Lavin M.F."/>
        </authorList>
    </citation>
    <scope>NUCLEOTIDE SEQUENCE [MRNA]</scope>
    <source>
        <tissue>Venom gland</tissue>
    </source>
</reference>
<name>VNPB_NOTSC</name>